<protein>
    <recommendedName>
        <fullName evidence="1">Small ribosomal subunit protein uS15</fullName>
    </recommendedName>
    <alternativeName>
        <fullName evidence="2">30S ribosomal protein S15</fullName>
    </alternativeName>
</protein>
<comment type="function">
    <text evidence="1">One of the primary rRNA binding proteins, it binds directly to 16S rRNA where it helps nucleate assembly of the platform of the 30S subunit by binding and bridging several RNA helices of the 16S rRNA.</text>
</comment>
<comment type="function">
    <text evidence="1">Forms an intersubunit bridge (bridge B4) with the 23S rRNA of the 50S subunit in the ribosome.</text>
</comment>
<comment type="subunit">
    <text evidence="1">Part of the 30S ribosomal subunit. Forms a bridge to the 50S subunit in the 70S ribosome, contacting the 23S rRNA.</text>
</comment>
<comment type="similarity">
    <text evidence="1">Belongs to the universal ribosomal protein uS15 family.</text>
</comment>
<keyword id="KW-0002">3D-structure</keyword>
<keyword id="KW-1185">Reference proteome</keyword>
<keyword id="KW-0687">Ribonucleoprotein</keyword>
<keyword id="KW-0689">Ribosomal protein</keyword>
<keyword id="KW-0694">RNA-binding</keyword>
<keyword id="KW-0699">rRNA-binding</keyword>
<gene>
    <name evidence="1" type="primary">rpsO</name>
    <name type="ordered locus">Rv2785c</name>
    <name type="ORF">MTV002.50c</name>
</gene>
<proteinExistence type="evidence at protein level"/>
<name>RS15_MYCTU</name>
<evidence type="ECO:0000255" key="1">
    <source>
        <dbReference type="HAMAP-Rule" id="MF_01343"/>
    </source>
</evidence>
<evidence type="ECO:0000305" key="2"/>
<accession>P9WH55</accession>
<accession>L0TC88</accession>
<accession>O33327</accession>
<accession>P66429</accession>
<sequence>MALTAEQKKEILRSYGLHETDTGSPEAQIALLTKRIADLTEHLKVHKHDHHSRRGLLLLVGRRRRLIKYISQIDVERYRSLIERLGLRR</sequence>
<dbReference type="EMBL" id="AL123456">
    <property type="protein sequence ID" value="CCP45584.1"/>
    <property type="molecule type" value="Genomic_DNA"/>
</dbReference>
<dbReference type="PIR" id="H70883">
    <property type="entry name" value="H70883"/>
</dbReference>
<dbReference type="RefSeq" id="NP_217301.1">
    <property type="nucleotide sequence ID" value="NC_000962.3"/>
</dbReference>
<dbReference type="RefSeq" id="WP_003414128.1">
    <property type="nucleotide sequence ID" value="NZ_NVQJ01000020.1"/>
</dbReference>
<dbReference type="PDB" id="5V93">
    <property type="method" value="EM"/>
    <property type="resolution" value="4.00 A"/>
    <property type="chains" value="o=1-89"/>
</dbReference>
<dbReference type="PDB" id="7KGB">
    <property type="method" value="EM"/>
    <property type="resolution" value="2.70 A"/>
    <property type="chains" value="o=1-89"/>
</dbReference>
<dbReference type="PDB" id="7MSC">
    <property type="method" value="EM"/>
    <property type="resolution" value="2.97 A"/>
    <property type="chains" value="o=1-89"/>
</dbReference>
<dbReference type="PDB" id="7MSH">
    <property type="method" value="EM"/>
    <property type="resolution" value="3.23 A"/>
    <property type="chains" value="o=1-89"/>
</dbReference>
<dbReference type="PDB" id="7MSM">
    <property type="method" value="EM"/>
    <property type="resolution" value="2.79 A"/>
    <property type="chains" value="o=1-89"/>
</dbReference>
<dbReference type="PDB" id="7MSZ">
    <property type="method" value="EM"/>
    <property type="resolution" value="3.10 A"/>
    <property type="chains" value="o=1-89"/>
</dbReference>
<dbReference type="PDB" id="7MT2">
    <property type="method" value="EM"/>
    <property type="resolution" value="2.76 A"/>
    <property type="chains" value="o=1-89"/>
</dbReference>
<dbReference type="PDB" id="7MT3">
    <property type="method" value="EM"/>
    <property type="resolution" value="2.80 A"/>
    <property type="chains" value="o=1-89"/>
</dbReference>
<dbReference type="PDB" id="7MT7">
    <property type="method" value="EM"/>
    <property type="resolution" value="2.71 A"/>
    <property type="chains" value="o=1-89"/>
</dbReference>
<dbReference type="PDB" id="7SFR">
    <property type="method" value="EM"/>
    <property type="resolution" value="2.60 A"/>
    <property type="chains" value="o=1-89"/>
</dbReference>
<dbReference type="PDBsum" id="5V93"/>
<dbReference type="PDBsum" id="7KGB"/>
<dbReference type="PDBsum" id="7MSC"/>
<dbReference type="PDBsum" id="7MSH"/>
<dbReference type="PDBsum" id="7MSM"/>
<dbReference type="PDBsum" id="7MSZ"/>
<dbReference type="PDBsum" id="7MT2"/>
<dbReference type="PDBsum" id="7MT3"/>
<dbReference type="PDBsum" id="7MT7"/>
<dbReference type="PDBsum" id="7SFR"/>
<dbReference type="EMDB" id="EMD-22865"/>
<dbReference type="EMDB" id="EMD-23961"/>
<dbReference type="EMDB" id="EMD-23962"/>
<dbReference type="EMDB" id="EMD-23969"/>
<dbReference type="EMDB" id="EMD-23972"/>
<dbReference type="EMDB" id="EMD-23974"/>
<dbReference type="EMDB" id="EMD-23975"/>
<dbReference type="EMDB" id="EMD-23976"/>
<dbReference type="EMDB" id="EMD-8645"/>
<dbReference type="SMR" id="P9WH55"/>
<dbReference type="FunCoup" id="P9WH55">
    <property type="interactions" value="182"/>
</dbReference>
<dbReference type="STRING" id="83332.Rv2785c"/>
<dbReference type="PaxDb" id="83332-Rv2785c"/>
<dbReference type="DNASU" id="888455"/>
<dbReference type="GeneID" id="45426774"/>
<dbReference type="GeneID" id="888455"/>
<dbReference type="KEGG" id="mtu:Rv2785c"/>
<dbReference type="KEGG" id="mtv:RVBD_2785c"/>
<dbReference type="TubercuList" id="Rv2785c"/>
<dbReference type="eggNOG" id="COG0184">
    <property type="taxonomic scope" value="Bacteria"/>
</dbReference>
<dbReference type="InParanoid" id="P9WH55"/>
<dbReference type="OrthoDB" id="9799262at2"/>
<dbReference type="PhylomeDB" id="P9WH55"/>
<dbReference type="PRO" id="PR:P9WH55"/>
<dbReference type="Proteomes" id="UP000001584">
    <property type="component" value="Chromosome"/>
</dbReference>
<dbReference type="GO" id="GO:0022627">
    <property type="term" value="C:cytosolic small ribosomal subunit"/>
    <property type="evidence" value="ECO:0000318"/>
    <property type="project" value="GO_Central"/>
</dbReference>
<dbReference type="GO" id="GO:0005886">
    <property type="term" value="C:plasma membrane"/>
    <property type="evidence" value="ECO:0007005"/>
    <property type="project" value="MTBBASE"/>
</dbReference>
<dbReference type="GO" id="GO:0019843">
    <property type="term" value="F:rRNA binding"/>
    <property type="evidence" value="ECO:0007669"/>
    <property type="project" value="UniProtKB-UniRule"/>
</dbReference>
<dbReference type="GO" id="GO:0003735">
    <property type="term" value="F:structural constituent of ribosome"/>
    <property type="evidence" value="ECO:0007669"/>
    <property type="project" value="InterPro"/>
</dbReference>
<dbReference type="GO" id="GO:0006412">
    <property type="term" value="P:translation"/>
    <property type="evidence" value="ECO:0007669"/>
    <property type="project" value="UniProtKB-UniRule"/>
</dbReference>
<dbReference type="CDD" id="cd00353">
    <property type="entry name" value="Ribosomal_S15p_S13e"/>
    <property type="match status" value="1"/>
</dbReference>
<dbReference type="FunFam" id="1.10.287.10:FF:000002">
    <property type="entry name" value="30S ribosomal protein S15"/>
    <property type="match status" value="1"/>
</dbReference>
<dbReference type="Gene3D" id="6.10.250.3130">
    <property type="match status" value="1"/>
</dbReference>
<dbReference type="Gene3D" id="1.10.287.10">
    <property type="entry name" value="S15/NS1, RNA-binding"/>
    <property type="match status" value="1"/>
</dbReference>
<dbReference type="HAMAP" id="MF_01343_B">
    <property type="entry name" value="Ribosomal_uS15_B"/>
    <property type="match status" value="1"/>
</dbReference>
<dbReference type="InterPro" id="IPR000589">
    <property type="entry name" value="Ribosomal_uS15"/>
</dbReference>
<dbReference type="InterPro" id="IPR005290">
    <property type="entry name" value="Ribosomal_uS15_bac-type"/>
</dbReference>
<dbReference type="InterPro" id="IPR009068">
    <property type="entry name" value="uS15_NS1_RNA-bd_sf"/>
</dbReference>
<dbReference type="NCBIfam" id="TIGR00952">
    <property type="entry name" value="S15_bact"/>
    <property type="match status" value="1"/>
</dbReference>
<dbReference type="PANTHER" id="PTHR23321">
    <property type="entry name" value="RIBOSOMAL PROTEIN S15, BACTERIAL AND ORGANELLAR"/>
    <property type="match status" value="1"/>
</dbReference>
<dbReference type="PANTHER" id="PTHR23321:SF26">
    <property type="entry name" value="SMALL RIBOSOMAL SUBUNIT PROTEIN US15M"/>
    <property type="match status" value="1"/>
</dbReference>
<dbReference type="Pfam" id="PF00312">
    <property type="entry name" value="Ribosomal_S15"/>
    <property type="match status" value="1"/>
</dbReference>
<dbReference type="SMART" id="SM01387">
    <property type="entry name" value="Ribosomal_S15"/>
    <property type="match status" value="1"/>
</dbReference>
<dbReference type="SUPFAM" id="SSF47060">
    <property type="entry name" value="S15/NS1 RNA-binding domain"/>
    <property type="match status" value="1"/>
</dbReference>
<dbReference type="PROSITE" id="PS00362">
    <property type="entry name" value="RIBOSOMAL_S15"/>
    <property type="match status" value="1"/>
</dbReference>
<organism>
    <name type="scientific">Mycobacterium tuberculosis (strain ATCC 25618 / H37Rv)</name>
    <dbReference type="NCBI Taxonomy" id="83332"/>
    <lineage>
        <taxon>Bacteria</taxon>
        <taxon>Bacillati</taxon>
        <taxon>Actinomycetota</taxon>
        <taxon>Actinomycetes</taxon>
        <taxon>Mycobacteriales</taxon>
        <taxon>Mycobacteriaceae</taxon>
        <taxon>Mycobacterium</taxon>
        <taxon>Mycobacterium tuberculosis complex</taxon>
    </lineage>
</organism>
<feature type="chain" id="PRO_0000115473" description="Small ribosomal subunit protein uS15">
    <location>
        <begin position="1"/>
        <end position="89"/>
    </location>
</feature>
<reference key="1">
    <citation type="journal article" date="1998" name="Nature">
        <title>Deciphering the biology of Mycobacterium tuberculosis from the complete genome sequence.</title>
        <authorList>
            <person name="Cole S.T."/>
            <person name="Brosch R."/>
            <person name="Parkhill J."/>
            <person name="Garnier T."/>
            <person name="Churcher C.M."/>
            <person name="Harris D.E."/>
            <person name="Gordon S.V."/>
            <person name="Eiglmeier K."/>
            <person name="Gas S."/>
            <person name="Barry C.E. III"/>
            <person name="Tekaia F."/>
            <person name="Badcock K."/>
            <person name="Basham D."/>
            <person name="Brown D."/>
            <person name="Chillingworth T."/>
            <person name="Connor R."/>
            <person name="Davies R.M."/>
            <person name="Devlin K."/>
            <person name="Feltwell T."/>
            <person name="Gentles S."/>
            <person name="Hamlin N."/>
            <person name="Holroyd S."/>
            <person name="Hornsby T."/>
            <person name="Jagels K."/>
            <person name="Krogh A."/>
            <person name="McLean J."/>
            <person name="Moule S."/>
            <person name="Murphy L.D."/>
            <person name="Oliver S."/>
            <person name="Osborne J."/>
            <person name="Quail M.A."/>
            <person name="Rajandream M.A."/>
            <person name="Rogers J."/>
            <person name="Rutter S."/>
            <person name="Seeger K."/>
            <person name="Skelton S."/>
            <person name="Squares S."/>
            <person name="Squares R."/>
            <person name="Sulston J.E."/>
            <person name="Taylor K."/>
            <person name="Whitehead S."/>
            <person name="Barrell B.G."/>
        </authorList>
    </citation>
    <scope>NUCLEOTIDE SEQUENCE [LARGE SCALE GENOMIC DNA]</scope>
    <source>
        <strain>ATCC 25618 / H37Rv</strain>
    </source>
</reference>
<reference key="2">
    <citation type="journal article" date="2011" name="Mol. Cell. Proteomics">
        <title>Proteogenomic analysis of Mycobacterium tuberculosis by high resolution mass spectrometry.</title>
        <authorList>
            <person name="Kelkar D.S."/>
            <person name="Kumar D."/>
            <person name="Kumar P."/>
            <person name="Balakrishnan L."/>
            <person name="Muthusamy B."/>
            <person name="Yadav A.K."/>
            <person name="Shrivastava P."/>
            <person name="Marimuthu A."/>
            <person name="Anand S."/>
            <person name="Sundaram H."/>
            <person name="Kingsbury R."/>
            <person name="Harsha H.C."/>
            <person name="Nair B."/>
            <person name="Prasad T.S."/>
            <person name="Chauhan D.S."/>
            <person name="Katoch K."/>
            <person name="Katoch V.M."/>
            <person name="Kumar P."/>
            <person name="Chaerkady R."/>
            <person name="Ramachandran S."/>
            <person name="Dash D."/>
            <person name="Pandey A."/>
        </authorList>
    </citation>
    <scope>IDENTIFICATION BY MASS SPECTROMETRY [LARGE SCALE ANALYSIS]</scope>
    <source>
        <strain>ATCC 25618 / H37Rv</strain>
    </source>
</reference>